<organism>
    <name type="scientific">Mus musculus</name>
    <name type="common">Mouse</name>
    <dbReference type="NCBI Taxonomy" id="10090"/>
    <lineage>
        <taxon>Eukaryota</taxon>
        <taxon>Metazoa</taxon>
        <taxon>Chordata</taxon>
        <taxon>Craniata</taxon>
        <taxon>Vertebrata</taxon>
        <taxon>Euteleostomi</taxon>
        <taxon>Mammalia</taxon>
        <taxon>Eutheria</taxon>
        <taxon>Euarchontoglires</taxon>
        <taxon>Glires</taxon>
        <taxon>Rodentia</taxon>
        <taxon>Myomorpha</taxon>
        <taxon>Muroidea</taxon>
        <taxon>Muridae</taxon>
        <taxon>Murinae</taxon>
        <taxon>Mus</taxon>
        <taxon>Mus</taxon>
    </lineage>
</organism>
<accession>Q9QZU9</accession>
<accession>Q3U8R0</accession>
<accession>Q922F1</accession>
<accession>Q9CQN0</accession>
<reference key="1">
    <citation type="submission" date="1999-06" db="EMBL/GenBank/DDBJ databases">
        <title>Progression from mammary hyperplasia to adenocarcinoma in MMTV-FGF8b transgenic mice is associated with altered expression of CD63, IGFBP7/mac25, alpha-synuclein, and UbcM8.</title>
        <authorList>
            <person name="Cook G."/>
            <person name="Lawshe A."/>
            <person name="MacArthur C.A."/>
        </authorList>
    </citation>
    <scope>NUCLEOTIDE SEQUENCE [MRNA]</scope>
</reference>
<reference key="2">
    <citation type="journal article" date="2005" name="Science">
        <title>The transcriptional landscape of the mammalian genome.</title>
        <authorList>
            <person name="Carninci P."/>
            <person name="Kasukawa T."/>
            <person name="Katayama S."/>
            <person name="Gough J."/>
            <person name="Frith M.C."/>
            <person name="Maeda N."/>
            <person name="Oyama R."/>
            <person name="Ravasi T."/>
            <person name="Lenhard B."/>
            <person name="Wells C."/>
            <person name="Kodzius R."/>
            <person name="Shimokawa K."/>
            <person name="Bajic V.B."/>
            <person name="Brenner S.E."/>
            <person name="Batalov S."/>
            <person name="Forrest A.R."/>
            <person name="Zavolan M."/>
            <person name="Davis M.J."/>
            <person name="Wilming L.G."/>
            <person name="Aidinis V."/>
            <person name="Allen J.E."/>
            <person name="Ambesi-Impiombato A."/>
            <person name="Apweiler R."/>
            <person name="Aturaliya R.N."/>
            <person name="Bailey T.L."/>
            <person name="Bansal M."/>
            <person name="Baxter L."/>
            <person name="Beisel K.W."/>
            <person name="Bersano T."/>
            <person name="Bono H."/>
            <person name="Chalk A.M."/>
            <person name="Chiu K.P."/>
            <person name="Choudhary V."/>
            <person name="Christoffels A."/>
            <person name="Clutterbuck D.R."/>
            <person name="Crowe M.L."/>
            <person name="Dalla E."/>
            <person name="Dalrymple B.P."/>
            <person name="de Bono B."/>
            <person name="Della Gatta G."/>
            <person name="di Bernardo D."/>
            <person name="Down T."/>
            <person name="Engstrom P."/>
            <person name="Fagiolini M."/>
            <person name="Faulkner G."/>
            <person name="Fletcher C.F."/>
            <person name="Fukushima T."/>
            <person name="Furuno M."/>
            <person name="Futaki S."/>
            <person name="Gariboldi M."/>
            <person name="Georgii-Hemming P."/>
            <person name="Gingeras T.R."/>
            <person name="Gojobori T."/>
            <person name="Green R.E."/>
            <person name="Gustincich S."/>
            <person name="Harbers M."/>
            <person name="Hayashi Y."/>
            <person name="Hensch T.K."/>
            <person name="Hirokawa N."/>
            <person name="Hill D."/>
            <person name="Huminiecki L."/>
            <person name="Iacono M."/>
            <person name="Ikeo K."/>
            <person name="Iwama A."/>
            <person name="Ishikawa T."/>
            <person name="Jakt M."/>
            <person name="Kanapin A."/>
            <person name="Katoh M."/>
            <person name="Kawasawa Y."/>
            <person name="Kelso J."/>
            <person name="Kitamura H."/>
            <person name="Kitano H."/>
            <person name="Kollias G."/>
            <person name="Krishnan S.P."/>
            <person name="Kruger A."/>
            <person name="Kummerfeld S.K."/>
            <person name="Kurochkin I.V."/>
            <person name="Lareau L.F."/>
            <person name="Lazarevic D."/>
            <person name="Lipovich L."/>
            <person name="Liu J."/>
            <person name="Liuni S."/>
            <person name="McWilliam S."/>
            <person name="Madan Babu M."/>
            <person name="Madera M."/>
            <person name="Marchionni L."/>
            <person name="Matsuda H."/>
            <person name="Matsuzawa S."/>
            <person name="Miki H."/>
            <person name="Mignone F."/>
            <person name="Miyake S."/>
            <person name="Morris K."/>
            <person name="Mottagui-Tabar S."/>
            <person name="Mulder N."/>
            <person name="Nakano N."/>
            <person name="Nakauchi H."/>
            <person name="Ng P."/>
            <person name="Nilsson R."/>
            <person name="Nishiguchi S."/>
            <person name="Nishikawa S."/>
            <person name="Nori F."/>
            <person name="Ohara O."/>
            <person name="Okazaki Y."/>
            <person name="Orlando V."/>
            <person name="Pang K.C."/>
            <person name="Pavan W.J."/>
            <person name="Pavesi G."/>
            <person name="Pesole G."/>
            <person name="Petrovsky N."/>
            <person name="Piazza S."/>
            <person name="Reed J."/>
            <person name="Reid J.F."/>
            <person name="Ring B.Z."/>
            <person name="Ringwald M."/>
            <person name="Rost B."/>
            <person name="Ruan Y."/>
            <person name="Salzberg S.L."/>
            <person name="Sandelin A."/>
            <person name="Schneider C."/>
            <person name="Schoenbach C."/>
            <person name="Sekiguchi K."/>
            <person name="Semple C.A."/>
            <person name="Seno S."/>
            <person name="Sessa L."/>
            <person name="Sheng Y."/>
            <person name="Shibata Y."/>
            <person name="Shimada H."/>
            <person name="Shimada K."/>
            <person name="Silva D."/>
            <person name="Sinclair B."/>
            <person name="Sperling S."/>
            <person name="Stupka E."/>
            <person name="Sugiura K."/>
            <person name="Sultana R."/>
            <person name="Takenaka Y."/>
            <person name="Taki K."/>
            <person name="Tammoja K."/>
            <person name="Tan S.L."/>
            <person name="Tang S."/>
            <person name="Taylor M.S."/>
            <person name="Tegner J."/>
            <person name="Teichmann S.A."/>
            <person name="Ueda H.R."/>
            <person name="van Nimwegen E."/>
            <person name="Verardo R."/>
            <person name="Wei C.L."/>
            <person name="Yagi K."/>
            <person name="Yamanishi H."/>
            <person name="Zabarovsky E."/>
            <person name="Zhu S."/>
            <person name="Zimmer A."/>
            <person name="Hide W."/>
            <person name="Bult C."/>
            <person name="Grimmond S.M."/>
            <person name="Teasdale R.D."/>
            <person name="Liu E.T."/>
            <person name="Brusic V."/>
            <person name="Quackenbush J."/>
            <person name="Wahlestedt C."/>
            <person name="Mattick J.S."/>
            <person name="Hume D.A."/>
            <person name="Kai C."/>
            <person name="Sasaki D."/>
            <person name="Tomaru Y."/>
            <person name="Fukuda S."/>
            <person name="Kanamori-Katayama M."/>
            <person name="Suzuki M."/>
            <person name="Aoki J."/>
            <person name="Arakawa T."/>
            <person name="Iida J."/>
            <person name="Imamura K."/>
            <person name="Itoh M."/>
            <person name="Kato T."/>
            <person name="Kawaji H."/>
            <person name="Kawagashira N."/>
            <person name="Kawashima T."/>
            <person name="Kojima M."/>
            <person name="Kondo S."/>
            <person name="Konno H."/>
            <person name="Nakano K."/>
            <person name="Ninomiya N."/>
            <person name="Nishio T."/>
            <person name="Okada M."/>
            <person name="Plessy C."/>
            <person name="Shibata K."/>
            <person name="Shiraki T."/>
            <person name="Suzuki S."/>
            <person name="Tagami M."/>
            <person name="Waki K."/>
            <person name="Watahiki A."/>
            <person name="Okamura-Oho Y."/>
            <person name="Suzuki H."/>
            <person name="Kawai J."/>
            <person name="Hayashizaki Y."/>
        </authorList>
    </citation>
    <scope>NUCLEOTIDE SEQUENCE [LARGE SCALE MRNA]</scope>
    <source>
        <strain>C57BL/6J</strain>
        <strain>NOD</strain>
        <tissue>Bone marrow</tissue>
        <tissue>Embryo</tissue>
        <tissue>Embryonic liver</tissue>
    </source>
</reference>
<reference key="3">
    <citation type="submission" date="2005-07" db="EMBL/GenBank/DDBJ databases">
        <authorList>
            <person name="Mural R.J."/>
            <person name="Adams M.D."/>
            <person name="Myers E.W."/>
            <person name="Smith H.O."/>
            <person name="Venter J.C."/>
        </authorList>
    </citation>
    <scope>NUCLEOTIDE SEQUENCE [LARGE SCALE GENOMIC DNA]</scope>
</reference>
<reference key="4">
    <citation type="journal article" date="2004" name="Genome Res.">
        <title>The status, quality, and expansion of the NIH full-length cDNA project: the Mammalian Gene Collection (MGC).</title>
        <authorList>
            <consortium name="The MGC Project Team"/>
        </authorList>
    </citation>
    <scope>NUCLEOTIDE SEQUENCE [LARGE SCALE MRNA]</scope>
</reference>
<reference key="5">
    <citation type="journal article" date="2010" name="Cell">
        <title>A tissue-specific atlas of mouse protein phosphorylation and expression.</title>
        <authorList>
            <person name="Huttlin E.L."/>
            <person name="Jedrychowski M.P."/>
            <person name="Elias J.E."/>
            <person name="Goswami T."/>
            <person name="Rad R."/>
            <person name="Beausoleil S.A."/>
            <person name="Villen J."/>
            <person name="Haas W."/>
            <person name="Sowa M.E."/>
            <person name="Gygi S.P."/>
        </authorList>
    </citation>
    <scope>IDENTIFICATION BY MASS SPECTROMETRY [LARGE SCALE ANALYSIS]</scope>
    <source>
        <tissue>Kidney</tissue>
        <tissue>Liver</tissue>
        <tissue>Lung</tissue>
        <tissue>Spleen</tissue>
    </source>
</reference>
<keyword id="KW-0067">ATP-binding</keyword>
<keyword id="KW-0547">Nucleotide-binding</keyword>
<keyword id="KW-1185">Reference proteome</keyword>
<keyword id="KW-0808">Transferase</keyword>
<keyword id="KW-0832">Ubl conjugation</keyword>
<keyword id="KW-0833">Ubl conjugation pathway</keyword>
<evidence type="ECO:0000250" key="1">
    <source>
        <dbReference type="UniProtKB" id="O14933"/>
    </source>
</evidence>
<evidence type="ECO:0000255" key="2">
    <source>
        <dbReference type="PROSITE-ProRule" id="PRU00388"/>
    </source>
</evidence>
<evidence type="ECO:0000255" key="3">
    <source>
        <dbReference type="PROSITE-ProRule" id="PRU10133"/>
    </source>
</evidence>
<evidence type="ECO:0000305" key="4"/>
<name>UB2L6_MOUSE</name>
<sequence length="153" mass="17841">MMASKRVAKELESLSKELPPYLRQLSSDDANVLVWHMLLLPDQLPYGLKAFQVRIDFPREYPFKPPTLRFTTKIYHPNVREDGLVCLPLISNENWKPYTKPYQVLEALNVLVSKPNLEEPVRLELADLLTQNPEMFRKKAEEFTLKFGVDRPS</sequence>
<feature type="chain" id="PRO_0000082479" description="Ubiquitin/ISG15-conjugating enzyme E2 L6">
    <location>
        <begin position="1"/>
        <end position="153"/>
    </location>
</feature>
<feature type="domain" description="UBC core" evidence="2">
    <location>
        <begin position="2"/>
        <end position="149"/>
    </location>
</feature>
<feature type="active site" description="Glycyl thioester intermediate" evidence="2 3">
    <location>
        <position position="86"/>
    </location>
</feature>
<feature type="sequence conflict" description="In Ref. 1; AAD55978." evidence="4" ref="1">
    <original>D</original>
    <variation>Y</variation>
    <location>
        <position position="29"/>
    </location>
</feature>
<feature type="sequence conflict" description="In Ref. 4; AAH08238." evidence="4" ref="4">
    <original>F</original>
    <variation>L</variation>
    <location>
        <position position="63"/>
    </location>
</feature>
<comment type="function">
    <text evidence="1">Catalyzes the covalent attachment of ubiquitin or ISG15 to other proteins. Functions in the E6/E6-AP-induced ubiquitination of p53/TP53. Promotes ubiquitination and subsequent proteasomal degradation of FLT3.</text>
</comment>
<comment type="catalytic activity">
    <reaction evidence="2 3">
        <text>S-ubiquitinyl-[E1 ubiquitin-activating enzyme]-L-cysteine + [E2 ubiquitin-conjugating enzyme]-L-cysteine = [E1 ubiquitin-activating enzyme]-L-cysteine + S-ubiquitinyl-[E2 ubiquitin-conjugating enzyme]-L-cysteine.</text>
        <dbReference type="EC" id="2.3.2.23"/>
    </reaction>
</comment>
<comment type="pathway">
    <text evidence="2">Protein modification; protein ubiquitination.</text>
</comment>
<comment type="subunit">
    <text evidence="1">Interacts with RNF19A, RNF19B and RNF144B. Interacts with FLT3 (tyrosine phosphorylated).</text>
</comment>
<comment type="PTM">
    <text evidence="1">ISGylated.</text>
</comment>
<comment type="similarity">
    <text evidence="2">Belongs to the ubiquitin-conjugating enzyme family.</text>
</comment>
<comment type="sequence caution" evidence="4">
    <conflict type="erroneous initiation">
        <sequence resource="EMBL-CDS" id="AAD55978"/>
    </conflict>
</comment>
<gene>
    <name type="primary">Ube2l6</name>
    <name type="synonym">Ubce8</name>
</gene>
<protein>
    <recommendedName>
        <fullName>Ubiquitin/ISG15-conjugating enzyme E2 L6</fullName>
        <ecNumber>2.3.2.23</ecNumber>
    </recommendedName>
    <alternativeName>
        <fullName>E2 ubiquitin-conjugating enzyme L6</fullName>
    </alternativeName>
    <alternativeName>
        <fullName>UbcM8</fullName>
    </alternativeName>
    <alternativeName>
        <fullName>Ubiquitin carrier protein L6</fullName>
    </alternativeName>
    <alternativeName>
        <fullName>Ubiquitin-protein ligase L6</fullName>
    </alternativeName>
</protein>
<proteinExistence type="evidence at protein level"/>
<dbReference type="EC" id="2.3.2.23"/>
<dbReference type="EMBL" id="AF159230">
    <property type="protein sequence ID" value="AAD55978.1"/>
    <property type="status" value="ALT_INIT"/>
    <property type="molecule type" value="mRNA"/>
</dbReference>
<dbReference type="EMBL" id="AK010942">
    <property type="protein sequence ID" value="BAB27282.1"/>
    <property type="molecule type" value="mRNA"/>
</dbReference>
<dbReference type="EMBL" id="AK013452">
    <property type="protein sequence ID" value="BAB28861.1"/>
    <property type="molecule type" value="mRNA"/>
</dbReference>
<dbReference type="EMBL" id="AK152010">
    <property type="protein sequence ID" value="BAE30873.1"/>
    <property type="molecule type" value="mRNA"/>
</dbReference>
<dbReference type="EMBL" id="AK152113">
    <property type="protein sequence ID" value="BAE30957.1"/>
    <property type="molecule type" value="mRNA"/>
</dbReference>
<dbReference type="EMBL" id="AK168695">
    <property type="protein sequence ID" value="BAE40539.1"/>
    <property type="molecule type" value="mRNA"/>
</dbReference>
<dbReference type="EMBL" id="AK171629">
    <property type="protein sequence ID" value="BAE42574.1"/>
    <property type="molecule type" value="mRNA"/>
</dbReference>
<dbReference type="EMBL" id="CH466519">
    <property type="protein sequence ID" value="EDL27303.1"/>
    <property type="molecule type" value="Genomic_DNA"/>
</dbReference>
<dbReference type="EMBL" id="BC008238">
    <property type="protein sequence ID" value="AAH08238.1"/>
    <property type="molecule type" value="mRNA"/>
</dbReference>
<dbReference type="CCDS" id="CCDS16194.2"/>
<dbReference type="RefSeq" id="NP_064333.2">
    <property type="nucleotide sequence ID" value="NM_019949.2"/>
</dbReference>
<dbReference type="SMR" id="Q9QZU9"/>
<dbReference type="FunCoup" id="Q9QZU9">
    <property type="interactions" value="210"/>
</dbReference>
<dbReference type="STRING" id="10090.ENSMUSP00000099702"/>
<dbReference type="iPTMnet" id="Q9QZU9"/>
<dbReference type="PhosphoSitePlus" id="Q9QZU9"/>
<dbReference type="SwissPalm" id="Q9QZU9"/>
<dbReference type="PaxDb" id="10090-ENSMUSP00000099702"/>
<dbReference type="ProteomicsDB" id="298173"/>
<dbReference type="Pumba" id="Q9QZU9"/>
<dbReference type="Antibodypedia" id="1142">
    <property type="antibodies" value="357 antibodies from 34 providers"/>
</dbReference>
<dbReference type="DNASU" id="56791"/>
<dbReference type="Ensembl" id="ENSMUST00000102642.9">
    <property type="protein sequence ID" value="ENSMUSP00000099702.3"/>
    <property type="gene ID" value="ENSMUSG00000027078.15"/>
</dbReference>
<dbReference type="GeneID" id="56791"/>
<dbReference type="KEGG" id="mmu:56791"/>
<dbReference type="UCSC" id="uc012byn.1">
    <property type="organism name" value="mouse"/>
</dbReference>
<dbReference type="AGR" id="MGI:1914500"/>
<dbReference type="CTD" id="9246"/>
<dbReference type="MGI" id="MGI:1914500">
    <property type="gene designation" value="Ube2l6"/>
</dbReference>
<dbReference type="VEuPathDB" id="HostDB:ENSMUSG00000027078"/>
<dbReference type="eggNOG" id="KOG0422">
    <property type="taxonomic scope" value="Eukaryota"/>
</dbReference>
<dbReference type="GeneTree" id="ENSGT00940000161981"/>
<dbReference type="HOGENOM" id="CLU_030988_13_3_1"/>
<dbReference type="InParanoid" id="Q9QZU9"/>
<dbReference type="OMA" id="PPYNLRA"/>
<dbReference type="OrthoDB" id="9973183at2759"/>
<dbReference type="PhylomeDB" id="Q9QZU9"/>
<dbReference type="TreeFam" id="TF313043"/>
<dbReference type="Reactome" id="R-MMU-1169408">
    <property type="pathway name" value="ISG15 antiviral mechanism"/>
</dbReference>
<dbReference type="Reactome" id="R-MMU-5656169">
    <property type="pathway name" value="Termination of translesion DNA synthesis"/>
</dbReference>
<dbReference type="Reactome" id="R-MMU-983168">
    <property type="pathway name" value="Antigen processing: Ubiquitination &amp; Proteasome degradation"/>
</dbReference>
<dbReference type="Reactome" id="R-MMU-9833482">
    <property type="pathway name" value="PKR-mediated signaling"/>
</dbReference>
<dbReference type="Reactome" id="R-MMU-9909505">
    <property type="pathway name" value="Modulation of host responses by IFN-stimulated genes"/>
</dbReference>
<dbReference type="UniPathway" id="UPA00143"/>
<dbReference type="BioGRID-ORCS" id="56791">
    <property type="hits" value="3 hits in 77 CRISPR screens"/>
</dbReference>
<dbReference type="ChiTaRS" id="Ube2l6">
    <property type="organism name" value="mouse"/>
</dbReference>
<dbReference type="PRO" id="PR:Q9QZU9"/>
<dbReference type="Proteomes" id="UP000000589">
    <property type="component" value="Chromosome 2"/>
</dbReference>
<dbReference type="RNAct" id="Q9QZU9">
    <property type="molecule type" value="protein"/>
</dbReference>
<dbReference type="Bgee" id="ENSMUSG00000027078">
    <property type="expression patterns" value="Expressed in blood and 94 other cell types or tissues"/>
</dbReference>
<dbReference type="ExpressionAtlas" id="Q9QZU9">
    <property type="expression patterns" value="baseline and differential"/>
</dbReference>
<dbReference type="GO" id="GO:0005524">
    <property type="term" value="F:ATP binding"/>
    <property type="evidence" value="ECO:0007669"/>
    <property type="project" value="UniProtKB-KW"/>
</dbReference>
<dbReference type="GO" id="GO:0042296">
    <property type="term" value="F:ISG15 transferase activity"/>
    <property type="evidence" value="ECO:0000314"/>
    <property type="project" value="MGI"/>
</dbReference>
<dbReference type="GO" id="GO:0061631">
    <property type="term" value="F:ubiquitin conjugating enzyme activity"/>
    <property type="evidence" value="ECO:0007669"/>
    <property type="project" value="UniProtKB-EC"/>
</dbReference>
<dbReference type="GO" id="GO:0019787">
    <property type="term" value="F:ubiquitin-like protein transferase activity"/>
    <property type="evidence" value="ECO:0000314"/>
    <property type="project" value="MGI"/>
</dbReference>
<dbReference type="GO" id="GO:0045087">
    <property type="term" value="P:innate immune response"/>
    <property type="evidence" value="ECO:0007669"/>
    <property type="project" value="Ensembl"/>
</dbReference>
<dbReference type="GO" id="GO:0032020">
    <property type="term" value="P:ISG15-protein conjugation"/>
    <property type="evidence" value="ECO:0000314"/>
    <property type="project" value="MGI"/>
</dbReference>
<dbReference type="GO" id="GO:0019941">
    <property type="term" value="P:modification-dependent protein catabolic process"/>
    <property type="evidence" value="ECO:0000314"/>
    <property type="project" value="MGI"/>
</dbReference>
<dbReference type="GO" id="GO:0016567">
    <property type="term" value="P:protein ubiquitination"/>
    <property type="evidence" value="ECO:0007669"/>
    <property type="project" value="UniProtKB-UniPathway"/>
</dbReference>
<dbReference type="CDD" id="cd23801">
    <property type="entry name" value="UBCc_UBE2L3"/>
    <property type="match status" value="1"/>
</dbReference>
<dbReference type="FunFam" id="3.10.110.10:FF:000011">
    <property type="entry name" value="Ubiquitin-conjugating enzyme E2 L3"/>
    <property type="match status" value="1"/>
</dbReference>
<dbReference type="Gene3D" id="3.10.110.10">
    <property type="entry name" value="Ubiquitin Conjugating Enzyme"/>
    <property type="match status" value="1"/>
</dbReference>
<dbReference type="InterPro" id="IPR050113">
    <property type="entry name" value="Ub_conjugating_enzyme"/>
</dbReference>
<dbReference type="InterPro" id="IPR000608">
    <property type="entry name" value="UBQ-conjugat_E2_core"/>
</dbReference>
<dbReference type="InterPro" id="IPR023313">
    <property type="entry name" value="UBQ-conjugating_AS"/>
</dbReference>
<dbReference type="InterPro" id="IPR016135">
    <property type="entry name" value="UBQ-conjugating_enzyme/RWD"/>
</dbReference>
<dbReference type="PANTHER" id="PTHR24067">
    <property type="entry name" value="UBIQUITIN-CONJUGATING ENZYME E2"/>
    <property type="match status" value="1"/>
</dbReference>
<dbReference type="Pfam" id="PF00179">
    <property type="entry name" value="UQ_con"/>
    <property type="match status" value="1"/>
</dbReference>
<dbReference type="SMART" id="SM00212">
    <property type="entry name" value="UBCc"/>
    <property type="match status" value="1"/>
</dbReference>
<dbReference type="SUPFAM" id="SSF54495">
    <property type="entry name" value="UBC-like"/>
    <property type="match status" value="1"/>
</dbReference>
<dbReference type="PROSITE" id="PS00183">
    <property type="entry name" value="UBC_1"/>
    <property type="match status" value="1"/>
</dbReference>
<dbReference type="PROSITE" id="PS50127">
    <property type="entry name" value="UBC_2"/>
    <property type="match status" value="1"/>
</dbReference>